<keyword id="KW-0244">Early protein</keyword>
<keyword id="KW-0945">Host-virus interaction</keyword>
<keyword id="KW-1081">Inhibition of host apoptosis by viral BCL2-like protein</keyword>
<keyword id="KW-1119">Modulation of host cell apoptosis by virus</keyword>
<evidence type="ECO:0000256" key="1">
    <source>
        <dbReference type="SAM" id="MobiDB-lite"/>
    </source>
</evidence>
<evidence type="ECO:0000305" key="2"/>
<accession>P06501</accession>
<reference key="1">
    <citation type="journal article" date="1984" name="J. Gen. Virol.">
        <title>The nucleotide sequence of the leftmost XhoI fragment (6%) of simian adenovirus SA7P.</title>
        <authorList>
            <person name="Dekker B.M.M."/>
            <person name="Konings D.A.M."/>
            <person name="Denisova T.S."/>
            <person name="Gibadulin R.A."/>
            <person name="van Ormondt H."/>
        </authorList>
    </citation>
    <scope>NUCLEOTIDE SEQUENCE [GENOMIC DNA]</scope>
</reference>
<sequence length="180" mass="21280">MDLRTALQTFESTRRLLELCSNRTSFLWRWLFGTPLSRLVRQVKLEYEKDFERILDQCPGVFESLELGYHKVFEEKIVKELDFSSPGRAVAAVAFASYLLDRWNTRTHLSPGYQMDYISLNLWKFWLRRRVYNYSRGLPQLGPAAPLARQGSQQEEQQQRQEEEQVQEEMRSGLDPPTEN</sequence>
<protein>
    <recommendedName>
        <fullName>E1B protein, small T-antigen</fullName>
    </recommendedName>
    <alternativeName>
        <fullName>E1B 19 kDa protein</fullName>
        <shortName>E1B-19K</shortName>
    </alternativeName>
</protein>
<proteinExistence type="inferred from homology"/>
<organism>
    <name type="scientific">Simian adenovirus serotype 7</name>
    <name type="common">SAdV-7</name>
    <name type="synonym">Simian adenovirus 7</name>
    <dbReference type="NCBI Taxonomy" id="10532"/>
    <lineage>
        <taxon>Viruses</taxon>
        <taxon>Varidnaviria</taxon>
        <taxon>Bamfordvirae</taxon>
        <taxon>Preplasmiviricota</taxon>
        <taxon>Tectiliviricetes</taxon>
        <taxon>Rowavirales</taxon>
        <taxon>Adenoviridae</taxon>
        <taxon>Mastadenovirus</taxon>
        <taxon>Human mastadenovirus G</taxon>
    </lineage>
</organism>
<name>E1BS_ADES7</name>
<feature type="chain" id="PRO_0000221722" description="E1B protein, small T-antigen">
    <location>
        <begin position="1"/>
        <end position="180"/>
    </location>
</feature>
<feature type="region of interest" description="Disordered" evidence="1">
    <location>
        <begin position="142"/>
        <end position="180"/>
    </location>
</feature>
<feature type="compositionally biased region" description="Basic and acidic residues" evidence="1">
    <location>
        <begin position="157"/>
        <end position="172"/>
    </location>
</feature>
<organismHost>
    <name type="scientific">Cercopithecinae</name>
    <dbReference type="NCBI Taxonomy" id="9528"/>
</organismHost>
<dbReference type="EMBL" id="X01027">
    <property type="protein sequence ID" value="CAA25513.1"/>
    <property type="molecule type" value="Genomic_DNA"/>
</dbReference>
<dbReference type="GO" id="GO:0042981">
    <property type="term" value="P:regulation of apoptotic process"/>
    <property type="evidence" value="ECO:0007669"/>
    <property type="project" value="InterPro"/>
</dbReference>
<dbReference type="GO" id="GO:0033668">
    <property type="term" value="P:symbiont-mediated suppression of host apoptosis"/>
    <property type="evidence" value="ECO:0007669"/>
    <property type="project" value="UniProtKB-KW"/>
</dbReference>
<dbReference type="InterPro" id="IPR002924">
    <property type="entry name" value="Adenovir_t-Ag_E1B_19kDa"/>
</dbReference>
<dbReference type="InterPro" id="IPR036834">
    <property type="entry name" value="Bcl-2-like_sf"/>
</dbReference>
<dbReference type="InterPro" id="IPR002475">
    <property type="entry name" value="Bcl2-like"/>
</dbReference>
<dbReference type="Pfam" id="PF01691">
    <property type="entry name" value="Adeno_E1B_19K"/>
    <property type="match status" value="1"/>
</dbReference>
<dbReference type="SUPFAM" id="SSF56854">
    <property type="entry name" value="Bcl-2 inhibitors of programmed cell death"/>
    <property type="match status" value="1"/>
</dbReference>
<dbReference type="PROSITE" id="PS50062">
    <property type="entry name" value="BCL2_FAMILY"/>
    <property type="match status" value="1"/>
</dbReference>
<comment type="similarity">
    <text evidence="2">Belongs to the adenoviridae E1B 19 kDa protein family.</text>
</comment>